<evidence type="ECO:0000250" key="1"/>
<evidence type="ECO:0000250" key="2">
    <source>
        <dbReference type="UniProtKB" id="P07900"/>
    </source>
</evidence>
<evidence type="ECO:0000250" key="3">
    <source>
        <dbReference type="UniProtKB" id="P07901"/>
    </source>
</evidence>
<evidence type="ECO:0000250" key="4">
    <source>
        <dbReference type="UniProtKB" id="P82995"/>
    </source>
</evidence>
<evidence type="ECO:0000256" key="5">
    <source>
        <dbReference type="SAM" id="MobiDB-lite"/>
    </source>
</evidence>
<evidence type="ECO:0000305" key="6"/>
<accession>A5A6K9</accession>
<keyword id="KW-0007">Acetylation</keyword>
<keyword id="KW-0067">ATP-binding</keyword>
<keyword id="KW-1003">Cell membrane</keyword>
<keyword id="KW-0143">Chaperone</keyword>
<keyword id="KW-0963">Cytoplasm</keyword>
<keyword id="KW-0472">Membrane</keyword>
<keyword id="KW-0547">Nucleotide-binding</keyword>
<keyword id="KW-0539">Nucleus</keyword>
<keyword id="KW-0597">Phosphoprotein</keyword>
<keyword id="KW-1185">Reference proteome</keyword>
<keyword id="KW-0702">S-nitrosylation</keyword>
<keyword id="KW-0346">Stress response</keyword>
<keyword id="KW-0832">Ubl conjugation</keyword>
<name>HS90A_PANTR</name>
<reference key="1">
    <citation type="journal article" date="2007" name="Gene">
        <title>Mapping of chimpanzee full-length cDNAs onto the human genome unveils large potential divergence of the transcriptome.</title>
        <authorList>
            <person name="Sakate R."/>
            <person name="Suto Y."/>
            <person name="Imanishi T."/>
            <person name="Tanoue T."/>
            <person name="Hida M."/>
            <person name="Hayasaka I."/>
            <person name="Kusuda J."/>
            <person name="Gojobori T."/>
            <person name="Hashimoto K."/>
            <person name="Hirai M."/>
        </authorList>
    </citation>
    <scope>NUCLEOTIDE SEQUENCE [MRNA]</scope>
    <source>
        <tissue>Brain</tissue>
    </source>
</reference>
<protein>
    <recommendedName>
        <fullName>Heat shock protein HSP 90-alpha</fullName>
    </recommendedName>
</protein>
<sequence length="733" mass="84773">MPEETQTQDQPMEEEEVETFAFQAEIAQLMSLIINTFYSNKEIFLRELISNSSDALDKIRYESLTDPSKLDSGKELHINLIPNKQDRTLTIVDTGIGMTKADLINNLGTIAKSGTKAFMEALQAGADISMIGQFGVGFYSAYLVAEKVTVITKHNDDEQYAWESSAGGSFTVRTDTGEPMGRGTKVIPHLKEDQTEYLEERRIKEIVKKHSQFIGYPITLFVEKERDKEVSDDEAEEKEDKEEEKEKEEKESEDKPEIEDVGSDEEEEEKKDGDKKKKKKIKEKYIDQEELNKTKPIWTRNPDDITNEEYGEFYKSLTNDWEDHLAVKHFSVEGQLEFRALLFVPRRAPFDLFENRKKKNNIKLYVRRVFIMDNCEELIPEYLNFIRGVVDSEDLPLNISREMLQQSKILKVIRKNLVKKCLELFTELAEDKENYKKFYEQFSKNIKLGIHEDSQNRKKLSELLRYYTSASGDEMVSLKDYCTRMKENQKHIYYITGETKDQVANSAFVERLRKHGLEVIYMIEPIDEYCVQQLKEFEGKTLVSVTKEGLELPEDEEEKKKQEEKKTKFENLCKIMKDILEKKVEKVVVSNRLVTSPCCIVTSTYGWTANMERIMKAQALRDNSTMGYMAAKKHLEINPDHSIIETLRQKAEADKNDKSVKDLVILLYETALLSSGFSLEDPQTHANRIYRMIKLGLGIDEDDPTADDTSAAVTEEMPPLEGDDDTSRMEEVD</sequence>
<dbReference type="EMBL" id="AB222137">
    <property type="protein sequence ID" value="BAF62382.1"/>
    <property type="molecule type" value="mRNA"/>
</dbReference>
<dbReference type="RefSeq" id="NP_001092042.1">
    <property type="nucleotide sequence ID" value="NM_001098572.1"/>
</dbReference>
<dbReference type="BMRB" id="A5A6K9"/>
<dbReference type="SMR" id="A5A6K9"/>
<dbReference type="STRING" id="9598.ENSPTRP00000070946"/>
<dbReference type="PaxDb" id="9598-ENSPTRP00000058433"/>
<dbReference type="GeneID" id="743883"/>
<dbReference type="CTD" id="3320"/>
<dbReference type="eggNOG" id="KOG0019">
    <property type="taxonomic scope" value="Eukaryota"/>
</dbReference>
<dbReference type="InParanoid" id="A5A6K9"/>
<dbReference type="Proteomes" id="UP000002277">
    <property type="component" value="Unplaced"/>
</dbReference>
<dbReference type="GO" id="GO:0005737">
    <property type="term" value="C:cytoplasm"/>
    <property type="evidence" value="ECO:0000250"/>
    <property type="project" value="AgBase"/>
</dbReference>
<dbReference type="GO" id="GO:0005829">
    <property type="term" value="C:cytosol"/>
    <property type="evidence" value="ECO:0000318"/>
    <property type="project" value="GO_Central"/>
</dbReference>
<dbReference type="GO" id="GO:0042470">
    <property type="term" value="C:melanosome"/>
    <property type="evidence" value="ECO:0007669"/>
    <property type="project" value="UniProtKB-SubCell"/>
</dbReference>
<dbReference type="GO" id="GO:0043209">
    <property type="term" value="C:myelin sheath"/>
    <property type="evidence" value="ECO:0000318"/>
    <property type="project" value="GO_Central"/>
</dbReference>
<dbReference type="GO" id="GO:0043025">
    <property type="term" value="C:neuronal cell body"/>
    <property type="evidence" value="ECO:0000318"/>
    <property type="project" value="GO_Central"/>
</dbReference>
<dbReference type="GO" id="GO:0005634">
    <property type="term" value="C:nucleus"/>
    <property type="evidence" value="ECO:0000250"/>
    <property type="project" value="AgBase"/>
</dbReference>
<dbReference type="GO" id="GO:0048471">
    <property type="term" value="C:perinuclear region of cytoplasm"/>
    <property type="evidence" value="ECO:0000318"/>
    <property type="project" value="GO_Central"/>
</dbReference>
<dbReference type="GO" id="GO:0005886">
    <property type="term" value="C:plasma membrane"/>
    <property type="evidence" value="ECO:0000318"/>
    <property type="project" value="GO_Central"/>
</dbReference>
<dbReference type="GO" id="GO:0032991">
    <property type="term" value="C:protein-containing complex"/>
    <property type="evidence" value="ECO:0000318"/>
    <property type="project" value="GO_Central"/>
</dbReference>
<dbReference type="GO" id="GO:0005524">
    <property type="term" value="F:ATP binding"/>
    <property type="evidence" value="ECO:0000250"/>
    <property type="project" value="UniProtKB"/>
</dbReference>
<dbReference type="GO" id="GO:0016887">
    <property type="term" value="F:ATP hydrolysis activity"/>
    <property type="evidence" value="ECO:0000318"/>
    <property type="project" value="GO_Central"/>
</dbReference>
<dbReference type="GO" id="GO:0140662">
    <property type="term" value="F:ATP-dependent protein folding chaperone"/>
    <property type="evidence" value="ECO:0007669"/>
    <property type="project" value="InterPro"/>
</dbReference>
<dbReference type="GO" id="GO:0051082">
    <property type="term" value="F:unfolded protein binding"/>
    <property type="evidence" value="ECO:0000318"/>
    <property type="project" value="GO_Central"/>
</dbReference>
<dbReference type="GO" id="GO:0034605">
    <property type="term" value="P:cellular response to heat"/>
    <property type="evidence" value="ECO:0000318"/>
    <property type="project" value="GO_Central"/>
</dbReference>
<dbReference type="GO" id="GO:0006457">
    <property type="term" value="P:protein folding"/>
    <property type="evidence" value="ECO:0000318"/>
    <property type="project" value="GO_Central"/>
</dbReference>
<dbReference type="GO" id="GO:0050821">
    <property type="term" value="P:protein stabilization"/>
    <property type="evidence" value="ECO:0000318"/>
    <property type="project" value="GO_Central"/>
</dbReference>
<dbReference type="GO" id="GO:0046677">
    <property type="term" value="P:response to antibiotic"/>
    <property type="evidence" value="ECO:0000250"/>
    <property type="project" value="AgBase"/>
</dbReference>
<dbReference type="GO" id="GO:0009409">
    <property type="term" value="P:response to cold"/>
    <property type="evidence" value="ECO:0000250"/>
    <property type="project" value="AgBase"/>
</dbReference>
<dbReference type="GO" id="GO:0009408">
    <property type="term" value="P:response to heat"/>
    <property type="evidence" value="ECO:0000250"/>
    <property type="project" value="AgBase"/>
</dbReference>
<dbReference type="CDD" id="cd16927">
    <property type="entry name" value="HATPase_Hsp90-like"/>
    <property type="match status" value="1"/>
</dbReference>
<dbReference type="FunFam" id="1.20.120.790:FF:000001">
    <property type="entry name" value="Heat shock protein 90 alpha"/>
    <property type="match status" value="1"/>
</dbReference>
<dbReference type="FunFam" id="3.30.230.80:FF:000001">
    <property type="entry name" value="Heat shock protein 90 alpha"/>
    <property type="match status" value="1"/>
</dbReference>
<dbReference type="FunFam" id="3.40.50.11260:FF:000001">
    <property type="entry name" value="Heat shock protein 90 alpha"/>
    <property type="match status" value="1"/>
</dbReference>
<dbReference type="FunFam" id="3.30.565.10:FF:000204">
    <property type="entry name" value="Heat shock protein HSP 90-beta"/>
    <property type="match status" value="1"/>
</dbReference>
<dbReference type="Gene3D" id="3.30.230.80">
    <property type="match status" value="1"/>
</dbReference>
<dbReference type="Gene3D" id="3.40.50.11260">
    <property type="match status" value="1"/>
</dbReference>
<dbReference type="Gene3D" id="1.20.120.790">
    <property type="entry name" value="Heat shock protein 90, C-terminal domain"/>
    <property type="match status" value="1"/>
</dbReference>
<dbReference type="Gene3D" id="3.30.565.10">
    <property type="entry name" value="Histidine kinase-like ATPase, C-terminal domain"/>
    <property type="match status" value="1"/>
</dbReference>
<dbReference type="HAMAP" id="MF_00505">
    <property type="entry name" value="HSP90"/>
    <property type="match status" value="1"/>
</dbReference>
<dbReference type="InterPro" id="IPR036890">
    <property type="entry name" value="HATPase_C_sf"/>
</dbReference>
<dbReference type="InterPro" id="IPR019805">
    <property type="entry name" value="Heat_shock_protein_90_CS"/>
</dbReference>
<dbReference type="InterPro" id="IPR037196">
    <property type="entry name" value="HSP90_C"/>
</dbReference>
<dbReference type="InterPro" id="IPR001404">
    <property type="entry name" value="Hsp90_fam"/>
</dbReference>
<dbReference type="InterPro" id="IPR020575">
    <property type="entry name" value="Hsp90_N"/>
</dbReference>
<dbReference type="InterPro" id="IPR020568">
    <property type="entry name" value="Ribosomal_Su5_D2-typ_SF"/>
</dbReference>
<dbReference type="NCBIfam" id="NF003555">
    <property type="entry name" value="PRK05218.1"/>
    <property type="match status" value="1"/>
</dbReference>
<dbReference type="PANTHER" id="PTHR11528">
    <property type="entry name" value="HEAT SHOCK PROTEIN 90 FAMILY MEMBER"/>
    <property type="match status" value="1"/>
</dbReference>
<dbReference type="Pfam" id="PF13589">
    <property type="entry name" value="HATPase_c_3"/>
    <property type="match status" value="1"/>
</dbReference>
<dbReference type="Pfam" id="PF00183">
    <property type="entry name" value="HSP90"/>
    <property type="match status" value="1"/>
</dbReference>
<dbReference type="PIRSF" id="PIRSF002583">
    <property type="entry name" value="Hsp90"/>
    <property type="match status" value="1"/>
</dbReference>
<dbReference type="PRINTS" id="PR00775">
    <property type="entry name" value="HEATSHOCK90"/>
</dbReference>
<dbReference type="SMART" id="SM00387">
    <property type="entry name" value="HATPase_c"/>
    <property type="match status" value="1"/>
</dbReference>
<dbReference type="SUPFAM" id="SSF55874">
    <property type="entry name" value="ATPase domain of HSP90 chaperone/DNA topoisomerase II/histidine kinase"/>
    <property type="match status" value="1"/>
</dbReference>
<dbReference type="SUPFAM" id="SSF110942">
    <property type="entry name" value="HSP90 C-terminal domain"/>
    <property type="match status" value="1"/>
</dbReference>
<dbReference type="SUPFAM" id="SSF54211">
    <property type="entry name" value="Ribosomal protein S5 domain 2-like"/>
    <property type="match status" value="1"/>
</dbReference>
<dbReference type="PROSITE" id="PS00298">
    <property type="entry name" value="HSP90"/>
    <property type="match status" value="1"/>
</dbReference>
<proteinExistence type="evidence at transcript level"/>
<comment type="function">
    <text evidence="2">Molecular chaperone that promotes the maturation, structural maintenance and proper regulation of specific target proteins involved for instance in cell cycle control and signal transduction. Undergoes a functional cycle that is linked to its ATPase activity which is essential for its chaperone activity. This cycle probably induces conformational changes in the client proteins, thereby causing their activation. Interacts dynamically with various co-chaperones that modulate its substrate recognition, ATPase cycle and chaperone function. Engages with a range of client protein classes via its interaction with various co-chaperone proteins or complexes, that act as adapters, simultaneously able to interact with the specific client and the central chaperone itself. Recruitment of ATP and co-chaperone followed by client protein forms a functional chaperone. After the completion of the chaperoning process, properly folded client protein and co-chaperone leave HSP90 in an ADP-bound partially open conformation and finally, ADP is released from HSP90 which acquires an open conformation for the next cycle. Apart from its chaperone activity, it also plays a role in the regulation of the transcription machinery. HSP90 and its co-chaperones modulate transcription at least at three different levels. In the first place, they alter the steady-state levels of certain transcription factors in response to various physiological cues. Second, they modulate the activity of certain epigenetic modifiers, such as histone deacetylases or DNA methyl transferases, and thereby respond to the change in the environment. Third, they participate in the eviction of histones from the promoter region of certain genes and thereby turn on gene expression. Binds bacterial lipopolysaccharide (LPS) and mediates LPS-induced inflammatory response, including TNF secretion by monocytes.</text>
</comment>
<comment type="activity regulation">
    <text evidence="2">In the resting state, through the dimerization of its C-terminal domain, HSP90 forms a homodimer which is defined as the open conformation. Upon ATP-binding, the N-terminal domain undergoes significant conformational changes and comes in contact to form an active closed conformation. After HSP90 finishes its chaperoning tasks of assisting the proper folding, stabilization and activation of client proteins under the active state, ATP molecule is hydrolyzed to ADP which then dissociates from HSP90 and directs the protein back to the resting state. Co-chaperone TSC1 promotes ATP binding and inhibits HSP90AA1 ATPase activity. Binding to phosphorylated AHSA1 promotes HSP90AA1 ATPase activity. Inhibited by Ganetespib (STA-9090) and SNX-2112.</text>
</comment>
<comment type="subunit">
    <text evidence="2 3 4">Homodimer. Identified in NR3C1/GCR steroid receptor-chaperone complexes formed at least by NR3C1, HSP90AA1 and a variety of proteins containing TPR repeats such as FKBP4, FKBP5, PPID, PPP5C or STIP1. Forms a complex containing HSP90AA1, TSC1 and TSC2; TSC1 is required to recruit TCS2 to the complex. The closed form interacts (via the middle domain and TPR repeat-binding motif) with co-chaperone TSC1 (via C-terminus). Interacts with TOM34. Interacts with TERT; the interaction, together with PTGES3, is required for correct assembly and stabilization of the TERT holoenzyme complex. Interacts with CHORDC1 and DNAJC7. Interacts with STUB1 and UBE2N; may couple the chaperone and ubiquitination systems. Interacts (via TPR repeat-binding motif) with PPP5C (via TPR repeats); the interaction is direct and activates PPP5C phosphatase activity. Following LPS binding, may form a complex with CXCR4, GDF5 and HSPA8. Interacts with KSR1. Interacts with co-chaperone CDC37 (via C-terminus); the interaction inhibits HSP90AA1 ATPase activity. May interact with NWD1. Interacts with FNIP1 and FNIP2; the interaction inhibits HSP90AA1 ATPase activity. Interacts with co-chaperone AHSA1 (phosphorylated on 'Tyr-223'); the interaction activates HSP90AA1 ATPase activity and results in the dissociation of TSC1 from HSP90AA1. Interacts with FLCN in the presence of FNIP1. Interacts with HSP70, STIP1 and PTGES3. Interacts with SMYD3; this interaction enhances SMYD3 histone-lysine N-methyltransferase. Interacts with SGTA (via TPR repeats). Interacts with TTC1 (via TPR repeats). Interacts with HSF1 in an ATP-dependent manner. Interacts with MET; the interaction suppresses MET kinase activity. Interacts with ERBB2 in an ATP-dependent manner; the interaction suppresses ERBB2 kinase activity. Interacts with HIF1A, KEAP1 and RHOBTB2. Interacts with HIF1A, KEAP1 and RHOBTB2 (By similarity). Interacts with HSF1; this interaction is decreased in a IER5-dependent manner, promoting HSF1 accumulation in the nucleus, homotrimerization and DNA-binding activities. Interacts with STUB1 and SMAD3. Interacts with HSP90AB1; interaction is constitutive (By similarity). Interacts with NR3C1 (via domain NR LBD) and NR1D1 (via domain NR LBD) (By similarity). Interacts with NLPR12. Interacts with PDCL3 (By similarity). Forms a complex with ASL, ASS1, SLC7A1, and NOS2; the complex regulates cell-autonomous L-arginine synthesis and citrulline recycling while channeling extracellular L-arginine to nitric oxide synthesis pathway.</text>
</comment>
<comment type="subcellular location">
    <subcellularLocation>
        <location evidence="3">Nucleus</location>
    </subcellularLocation>
    <subcellularLocation>
        <location evidence="3">Cytoplasm</location>
    </subcellularLocation>
    <subcellularLocation>
        <location evidence="2">Melanosome</location>
    </subcellularLocation>
    <subcellularLocation>
        <location evidence="2">Cell membrane</location>
    </subcellularLocation>
</comment>
<comment type="domain">
    <text evidence="2">The TPR repeat-binding motif mediates interaction with TPR repeat-containing proteins like the co-chaperone STUB1.</text>
</comment>
<comment type="PTM">
    <text evidence="2">ISGylated.</text>
</comment>
<comment type="PTM">
    <text evidence="2">S-nitrosylated; negatively regulates the ATPase activity and the activation of eNOS by HSP90AA1.</text>
</comment>
<comment type="PTM">
    <text evidence="3">Ubiquitinated via 'Lys-63'-linked polyubiquitination by HECTD1. Ubiquitination promotes translocation into the cytoplasm away from the membrane and secretory pathways.</text>
</comment>
<comment type="similarity">
    <text evidence="6">Belongs to the heat shock protein 90 family.</text>
</comment>
<feature type="chain" id="PRO_0000297556" description="Heat shock protein HSP 90-alpha">
    <location>
        <begin position="1"/>
        <end position="733"/>
    </location>
</feature>
<feature type="region of interest" description="Interaction with NR3C1" evidence="3">
    <location>
        <begin position="9"/>
        <end position="236"/>
    </location>
</feature>
<feature type="region of interest" description="Disordered" evidence="5">
    <location>
        <begin position="225"/>
        <end position="279"/>
    </location>
</feature>
<feature type="region of interest" description="Interaction with NR3C1" evidence="3">
    <location>
        <begin position="272"/>
        <end position="617"/>
    </location>
</feature>
<feature type="region of interest" description="Interaction with FLCN and FNIP1" evidence="2">
    <location>
        <begin position="285"/>
        <end position="733"/>
    </location>
</feature>
<feature type="region of interest" description="Interaction with FNIP2 and TSC1" evidence="2">
    <location>
        <begin position="285"/>
        <end position="621"/>
    </location>
</feature>
<feature type="region of interest" description="Interaction with NR1D1" evidence="3">
    <location>
        <begin position="629"/>
        <end position="732"/>
    </location>
</feature>
<feature type="region of interest" description="Required for homodimerization" evidence="2">
    <location>
        <begin position="683"/>
        <end position="733"/>
    </location>
</feature>
<feature type="region of interest" description="Disordered" evidence="5">
    <location>
        <begin position="701"/>
        <end position="733"/>
    </location>
</feature>
<feature type="region of interest" description="Essential for interaction with SMYD3, TSC1 and STIP1/HOP" evidence="2">
    <location>
        <begin position="729"/>
        <end position="733"/>
    </location>
</feature>
<feature type="region of interest" description="Essential for interaction with SGTA and TTC1" evidence="2">
    <location>
        <begin position="730"/>
        <end position="733"/>
    </location>
</feature>
<feature type="short sequence motif" description="TPR repeat-binding" evidence="2">
    <location>
        <begin position="724"/>
        <end position="733"/>
    </location>
</feature>
<feature type="compositionally biased region" description="Acidic residues" evidence="5">
    <location>
        <begin position="230"/>
        <end position="246"/>
    </location>
</feature>
<feature type="compositionally biased region" description="Acidic residues" evidence="5">
    <location>
        <begin position="256"/>
        <end position="269"/>
    </location>
</feature>
<feature type="binding site" evidence="1">
    <location>
        <position position="51"/>
    </location>
    <ligand>
        <name>ATP</name>
        <dbReference type="ChEBI" id="CHEBI:30616"/>
    </ligand>
</feature>
<feature type="binding site" evidence="1">
    <location>
        <position position="93"/>
    </location>
    <ligand>
        <name>ATP</name>
        <dbReference type="ChEBI" id="CHEBI:30616"/>
    </ligand>
</feature>
<feature type="binding site" evidence="1">
    <location>
        <position position="112"/>
    </location>
    <ligand>
        <name>ATP</name>
        <dbReference type="ChEBI" id="CHEBI:30616"/>
    </ligand>
</feature>
<feature type="binding site" evidence="1">
    <location>
        <position position="138"/>
    </location>
    <ligand>
        <name>ATP</name>
        <dbReference type="ChEBI" id="CHEBI:30616"/>
    </ligand>
</feature>
<feature type="binding site" evidence="1">
    <location>
        <position position="401"/>
    </location>
    <ligand>
        <name>ATP</name>
        <dbReference type="ChEBI" id="CHEBI:30616"/>
    </ligand>
</feature>
<feature type="modified residue" description="Phosphothreonine; by PRKDC" evidence="2">
    <location>
        <position position="5"/>
    </location>
</feature>
<feature type="modified residue" description="Phosphothreonine; by PRKDC" evidence="2">
    <location>
        <position position="7"/>
    </location>
</feature>
<feature type="modified residue" description="N6-acetyllysine" evidence="3">
    <location>
        <position position="58"/>
    </location>
</feature>
<feature type="modified residue" description="N6-acetyllysine" evidence="3">
    <location>
        <position position="84"/>
    </location>
</feature>
<feature type="modified residue" description="Phosphoserine" evidence="2">
    <location>
        <position position="231"/>
    </location>
</feature>
<feature type="modified residue" description="Phosphoserine" evidence="2">
    <location>
        <position position="252"/>
    </location>
</feature>
<feature type="modified residue" description="Phosphoserine" evidence="2">
    <location>
        <position position="263"/>
    </location>
</feature>
<feature type="modified residue" description="Phosphotyrosine" evidence="3">
    <location>
        <position position="314"/>
    </location>
</feature>
<feature type="modified residue" description="N6-acetyllysine" evidence="2">
    <location>
        <position position="444"/>
    </location>
</feature>
<feature type="modified residue" description="Phosphoserine" evidence="4">
    <location>
        <position position="454"/>
    </location>
</feature>
<feature type="modified residue" description="N6-acetyllysine" evidence="2">
    <location>
        <position position="459"/>
    </location>
</feature>
<feature type="modified residue" description="Phosphoserine" evidence="2">
    <location>
        <position position="477"/>
    </location>
</feature>
<feature type="modified residue" description="N6-acetyllysine" evidence="2">
    <location>
        <position position="490"/>
    </location>
</feature>
<feature type="modified residue" description="Phosphotyrosine" evidence="3">
    <location>
        <position position="493"/>
    </location>
</feature>
<feature type="modified residue" description="N6-acetyllysine" evidence="2">
    <location>
        <position position="586"/>
    </location>
</feature>
<feature type="modified residue" description="S-nitrosocysteine" evidence="2">
    <location>
        <position position="599"/>
    </location>
</feature>
<feature type="modified residue" description="Phosphoserine" evidence="2">
    <location>
        <position position="642"/>
    </location>
</feature>
<organism>
    <name type="scientific">Pan troglodytes</name>
    <name type="common">Chimpanzee</name>
    <dbReference type="NCBI Taxonomy" id="9598"/>
    <lineage>
        <taxon>Eukaryota</taxon>
        <taxon>Metazoa</taxon>
        <taxon>Chordata</taxon>
        <taxon>Craniata</taxon>
        <taxon>Vertebrata</taxon>
        <taxon>Euteleostomi</taxon>
        <taxon>Mammalia</taxon>
        <taxon>Eutheria</taxon>
        <taxon>Euarchontoglires</taxon>
        <taxon>Primates</taxon>
        <taxon>Haplorrhini</taxon>
        <taxon>Catarrhini</taxon>
        <taxon>Hominidae</taxon>
        <taxon>Pan</taxon>
    </lineage>
</organism>
<gene>
    <name type="primary">HSP90AA1</name>
</gene>